<protein>
    <recommendedName>
        <fullName>Repetitive proline-rich cell wall protein 2</fullName>
    </recommendedName>
</protein>
<dbReference type="EMBL" id="S44202">
    <property type="protein sequence ID" value="AAD13836.1"/>
    <property type="molecule type" value="mRNA"/>
</dbReference>
<dbReference type="EMBL" id="J05208">
    <property type="protein sequence ID" value="AAA34011.1"/>
    <property type="molecule type" value="Genomic_DNA"/>
</dbReference>
<dbReference type="EMBL" id="X16574">
    <property type="protein sequence ID" value="CAA34593.1"/>
    <property type="molecule type" value="Genomic_DNA"/>
</dbReference>
<dbReference type="PIR" id="S14912">
    <property type="entry name" value="PJSY3"/>
</dbReference>
<dbReference type="RefSeq" id="NP_001238593.1">
    <property type="nucleotide sequence ID" value="NM_001251664.1"/>
</dbReference>
<dbReference type="STRING" id="3847.P13993"/>
<dbReference type="PaxDb" id="3847-GLYMA09G12252.1"/>
<dbReference type="GeneID" id="547830"/>
<dbReference type="KEGG" id="gmx:547830"/>
<dbReference type="eggNOG" id="ENOG502S0UH">
    <property type="taxonomic scope" value="Eukaryota"/>
</dbReference>
<dbReference type="InParanoid" id="P13993"/>
<dbReference type="Proteomes" id="UP000008827">
    <property type="component" value="Unplaced"/>
</dbReference>
<dbReference type="GO" id="GO:0005576">
    <property type="term" value="C:extracellular region"/>
    <property type="evidence" value="ECO:0007669"/>
    <property type="project" value="UniProtKB-KW"/>
</dbReference>
<dbReference type="GO" id="GO:0005199">
    <property type="term" value="F:structural constituent of cell wall"/>
    <property type="evidence" value="ECO:0007669"/>
    <property type="project" value="InterPro"/>
</dbReference>
<dbReference type="InterPro" id="IPR002964">
    <property type="entry name" value="Adhesive_plaq"/>
</dbReference>
<dbReference type="InterPro" id="IPR003883">
    <property type="entry name" value="Extensin-like"/>
</dbReference>
<dbReference type="InterPro" id="IPR051308">
    <property type="entry name" value="Proline-rich_CW_protein"/>
</dbReference>
<dbReference type="PANTHER" id="PTHR34629">
    <property type="entry name" value="PROLINE-RICH EXTENSIN-LIKE PROTEIN EPR1"/>
    <property type="match status" value="1"/>
</dbReference>
<dbReference type="PANTHER" id="PTHR34629:SF4">
    <property type="entry name" value="REPETITIVE PROLINE-RICH CELL WALL PROTEIN 3"/>
    <property type="match status" value="1"/>
</dbReference>
<dbReference type="Pfam" id="PF02095">
    <property type="entry name" value="Extensin_1"/>
    <property type="match status" value="2"/>
</dbReference>
<dbReference type="PRINTS" id="PR01216">
    <property type="entry name" value="ADHESIVEI"/>
</dbReference>
<comment type="function">
    <text>This is a developmentally regulated putative cell wall protein.</text>
</comment>
<comment type="subcellular location">
    <subcellularLocation>
        <location evidence="2">Secreted</location>
        <location evidence="2">Cell wall</location>
    </subcellularLocation>
</comment>
<comment type="similarity">
    <text evidence="2">Belongs to the plant proline-rich protein superfamily. ENOD12 family.</text>
</comment>
<reference key="1">
    <citation type="journal article" date="1990" name="J. Biol. Chem.">
        <title>Characterization of a proline-rich cell wall protein gene family of soybean. A comparative analysis.</title>
        <authorList>
            <person name="Hong J.C."/>
            <person name="Nagao R.T."/>
            <person name="Key J.L."/>
        </authorList>
    </citation>
    <scope>NUCLEOTIDE SEQUENCE [GENOMIC DNA]</scope>
</reference>
<reference key="2">
    <citation type="journal article" date="1990" name="Plant Mol. Biol.">
        <title>Nucleotide sequence of a gene encoding soybean repetitive proline-rich protein 3.</title>
        <authorList>
            <person name="Datta K."/>
            <person name="Marcus A."/>
        </authorList>
    </citation>
    <scope>NUCLEOTIDE SEQUENCE [GENOMIC DNA]</scope>
    <source>
        <strain>cv. Wayne</strain>
    </source>
</reference>
<reference key="3">
    <citation type="journal article" date="1989" name="Plant Cell">
        <title>Characterization of two soybean repetitive proline-rich proteins and a cognate cDNA from germinated axes.</title>
        <authorList>
            <person name="Datta K."/>
            <person name="Schmidt A."/>
            <person name="Marcus A."/>
        </authorList>
    </citation>
    <scope>NUCLEOTIDE SEQUENCE</scope>
    <source>
        <strain>cv. Hobbit</strain>
    </source>
</reference>
<feature type="signal peptide">
    <location>
        <begin position="1"/>
        <end position="22"/>
    </location>
</feature>
<feature type="chain" id="PRO_0000019811" description="Repetitive proline-rich cell wall protein 2">
    <location>
        <begin position="23"/>
        <end position="230"/>
    </location>
</feature>
<feature type="repeat" description="1">
    <location>
        <begin position="27"/>
        <end position="31"/>
    </location>
</feature>
<feature type="repeat" description="2">
    <location>
        <begin position="32"/>
        <end position="36"/>
    </location>
</feature>
<feature type="repeat" description="3">
    <location>
        <begin position="37"/>
        <end position="41"/>
    </location>
</feature>
<feature type="repeat" description="4">
    <location>
        <begin position="42"/>
        <end position="46"/>
    </location>
</feature>
<feature type="repeat" description="5">
    <location>
        <begin position="47"/>
        <end position="51"/>
    </location>
</feature>
<feature type="repeat" description="6">
    <location>
        <begin position="52"/>
        <end position="56"/>
    </location>
</feature>
<feature type="repeat" description="7">
    <location>
        <begin position="57"/>
        <end position="61"/>
    </location>
</feature>
<feature type="repeat" description="8">
    <location>
        <begin position="62"/>
        <end position="66"/>
    </location>
</feature>
<feature type="repeat" description="9">
    <location>
        <begin position="67"/>
        <end position="71"/>
    </location>
</feature>
<feature type="repeat" description="10">
    <location>
        <begin position="72"/>
        <end position="76"/>
    </location>
</feature>
<feature type="repeat" description="11">
    <location>
        <begin position="77"/>
        <end position="81"/>
    </location>
</feature>
<feature type="repeat" description="12">
    <location>
        <begin position="82"/>
        <end position="86"/>
    </location>
</feature>
<feature type="repeat" description="13">
    <location>
        <begin position="87"/>
        <end position="91"/>
    </location>
</feature>
<feature type="repeat" description="14">
    <location>
        <begin position="92"/>
        <end position="96"/>
    </location>
</feature>
<feature type="repeat" description="15">
    <location>
        <begin position="97"/>
        <end position="101"/>
    </location>
</feature>
<feature type="repeat" description="16">
    <location>
        <begin position="102"/>
        <end position="106"/>
    </location>
</feature>
<feature type="repeat" description="17">
    <location>
        <begin position="107"/>
        <end position="111"/>
    </location>
</feature>
<feature type="repeat" description="18">
    <location>
        <begin position="112"/>
        <end position="116"/>
    </location>
</feature>
<feature type="repeat" description="19">
    <location>
        <begin position="117"/>
        <end position="121"/>
    </location>
</feature>
<feature type="repeat" description="20">
    <location>
        <begin position="122"/>
        <end position="126"/>
    </location>
</feature>
<feature type="repeat" description="21">
    <location>
        <begin position="127"/>
        <end position="131"/>
    </location>
</feature>
<feature type="repeat" description="22">
    <location>
        <begin position="132"/>
        <end position="136"/>
    </location>
</feature>
<feature type="repeat" description="23">
    <location>
        <begin position="137"/>
        <end position="141"/>
    </location>
</feature>
<feature type="repeat" description="24">
    <location>
        <begin position="142"/>
        <end position="146"/>
    </location>
</feature>
<feature type="repeat" description="25">
    <location>
        <begin position="147"/>
        <end position="151"/>
    </location>
</feature>
<feature type="repeat" description="26">
    <location>
        <begin position="152"/>
        <end position="156"/>
    </location>
</feature>
<feature type="repeat" description="27">
    <location>
        <begin position="157"/>
        <end position="161"/>
    </location>
</feature>
<feature type="repeat" description="28">
    <location>
        <begin position="162"/>
        <end position="166"/>
    </location>
</feature>
<feature type="repeat" description="29">
    <location>
        <begin position="167"/>
        <end position="171"/>
    </location>
</feature>
<feature type="repeat" description="30">
    <location>
        <begin position="172"/>
        <end position="176"/>
    </location>
</feature>
<feature type="repeat" description="31">
    <location>
        <begin position="177"/>
        <end position="181"/>
    </location>
</feature>
<feature type="repeat" description="32">
    <location>
        <begin position="182"/>
        <end position="186"/>
    </location>
</feature>
<feature type="repeat" description="33">
    <location>
        <begin position="187"/>
        <end position="191"/>
    </location>
</feature>
<feature type="repeat" description="34">
    <location>
        <begin position="192"/>
        <end position="196"/>
    </location>
</feature>
<feature type="repeat" description="35">
    <location>
        <begin position="197"/>
        <end position="201"/>
    </location>
</feature>
<feature type="repeat" description="36">
    <location>
        <begin position="202"/>
        <end position="206"/>
    </location>
</feature>
<feature type="repeat" description="37">
    <location>
        <begin position="207"/>
        <end position="211"/>
    </location>
</feature>
<feature type="repeat" description="38">
    <location>
        <begin position="212"/>
        <end position="216"/>
    </location>
</feature>
<feature type="repeat" description="39">
    <location>
        <begin position="217"/>
        <end position="221"/>
    </location>
</feature>
<feature type="repeat" description="40; approximate">
    <location>
        <begin position="222"/>
        <end position="226"/>
    </location>
</feature>
<feature type="region of interest" description="40 X 5 AA approximate tandem repeats of P-P-[VTIY]-[EYGP]-[KN]">
    <location>
        <begin position="27"/>
        <end position="226"/>
    </location>
</feature>
<feature type="region of interest" description="Disordered" evidence="1">
    <location>
        <begin position="78"/>
        <end position="230"/>
    </location>
</feature>
<feature type="compositionally biased region" description="Pro residues" evidence="1">
    <location>
        <begin position="78"/>
        <end position="223"/>
    </location>
</feature>
<organism>
    <name type="scientific">Glycine max</name>
    <name type="common">Soybean</name>
    <name type="synonym">Glycine hispida</name>
    <dbReference type="NCBI Taxonomy" id="3847"/>
    <lineage>
        <taxon>Eukaryota</taxon>
        <taxon>Viridiplantae</taxon>
        <taxon>Streptophyta</taxon>
        <taxon>Embryophyta</taxon>
        <taxon>Tracheophyta</taxon>
        <taxon>Spermatophyta</taxon>
        <taxon>Magnoliopsida</taxon>
        <taxon>eudicotyledons</taxon>
        <taxon>Gunneridae</taxon>
        <taxon>Pentapetalae</taxon>
        <taxon>rosids</taxon>
        <taxon>fabids</taxon>
        <taxon>Fabales</taxon>
        <taxon>Fabaceae</taxon>
        <taxon>Papilionoideae</taxon>
        <taxon>50 kb inversion clade</taxon>
        <taxon>NPAAA clade</taxon>
        <taxon>indigoferoid/millettioid clade</taxon>
        <taxon>Phaseoleae</taxon>
        <taxon>Glycine</taxon>
        <taxon>Glycine subgen. Soja</taxon>
    </lineage>
</organism>
<name>PRP2_SOYBN</name>
<accession>P13993</accession>
<proteinExistence type="evidence at transcript level"/>
<gene>
    <name type="primary">PRP2</name>
    <name type="synonym">RPRP3</name>
</gene>
<keyword id="KW-0134">Cell wall</keyword>
<keyword id="KW-0217">Developmental protein</keyword>
<keyword id="KW-1185">Reference proteome</keyword>
<keyword id="KW-0677">Repeat</keyword>
<keyword id="KW-0964">Secreted</keyword>
<keyword id="KW-0732">Signal</keyword>
<evidence type="ECO:0000256" key="1">
    <source>
        <dbReference type="SAM" id="MobiDB-lite"/>
    </source>
</evidence>
<evidence type="ECO:0000305" key="2"/>
<sequence length="230" mass="25981">MASLSSLVLLLAALILSPQVLANYENPPVYKPPTEKPPVYKPPVEKPPVYKPPVENPPIYKPPVEKPPVYKPPVEKPPVYKPPVEKPPVYKPPVEKPPVYKPPVEKPPVYKPPVEKPPVYKPPVEKPPVYKPPVEKPPVYKPPVEKPPVYKPPVEKPPVYKPPVEKPPVYKPPVEKPPVYKPPVEKPPVYKPPVEKPPIYKPPVEKPPVYKPPYGKPPYPKYPPTDDTHF</sequence>